<name>RL9_CLOBL</name>
<organism>
    <name type="scientific">Clostridium botulinum (strain Langeland / NCTC 10281 / Type F)</name>
    <dbReference type="NCBI Taxonomy" id="441772"/>
    <lineage>
        <taxon>Bacteria</taxon>
        <taxon>Bacillati</taxon>
        <taxon>Bacillota</taxon>
        <taxon>Clostridia</taxon>
        <taxon>Eubacteriales</taxon>
        <taxon>Clostridiaceae</taxon>
        <taxon>Clostridium</taxon>
    </lineage>
</organism>
<keyword id="KW-0687">Ribonucleoprotein</keyword>
<keyword id="KW-0689">Ribosomal protein</keyword>
<keyword id="KW-0694">RNA-binding</keyword>
<keyword id="KW-0699">rRNA-binding</keyword>
<dbReference type="EMBL" id="CP000728">
    <property type="protein sequence ID" value="ABS39346.1"/>
    <property type="molecule type" value="Genomic_DNA"/>
</dbReference>
<dbReference type="RefSeq" id="WP_003359455.1">
    <property type="nucleotide sequence ID" value="NC_009699.1"/>
</dbReference>
<dbReference type="SMR" id="A7GJL8"/>
<dbReference type="GeneID" id="92940422"/>
<dbReference type="KEGG" id="cbf:CLI_3867"/>
<dbReference type="HOGENOM" id="CLU_078938_3_0_9"/>
<dbReference type="Proteomes" id="UP000002410">
    <property type="component" value="Chromosome"/>
</dbReference>
<dbReference type="GO" id="GO:1990904">
    <property type="term" value="C:ribonucleoprotein complex"/>
    <property type="evidence" value="ECO:0007669"/>
    <property type="project" value="UniProtKB-KW"/>
</dbReference>
<dbReference type="GO" id="GO:0005840">
    <property type="term" value="C:ribosome"/>
    <property type="evidence" value="ECO:0007669"/>
    <property type="project" value="UniProtKB-KW"/>
</dbReference>
<dbReference type="GO" id="GO:0019843">
    <property type="term" value="F:rRNA binding"/>
    <property type="evidence" value="ECO:0007669"/>
    <property type="project" value="UniProtKB-UniRule"/>
</dbReference>
<dbReference type="GO" id="GO:0003735">
    <property type="term" value="F:structural constituent of ribosome"/>
    <property type="evidence" value="ECO:0007669"/>
    <property type="project" value="InterPro"/>
</dbReference>
<dbReference type="GO" id="GO:0006412">
    <property type="term" value="P:translation"/>
    <property type="evidence" value="ECO:0007669"/>
    <property type="project" value="UniProtKB-UniRule"/>
</dbReference>
<dbReference type="FunFam" id="3.40.5.10:FF:000002">
    <property type="entry name" value="50S ribosomal protein L9"/>
    <property type="match status" value="1"/>
</dbReference>
<dbReference type="Gene3D" id="3.10.430.100">
    <property type="entry name" value="Ribosomal protein L9, C-terminal domain"/>
    <property type="match status" value="1"/>
</dbReference>
<dbReference type="Gene3D" id="3.40.5.10">
    <property type="entry name" value="Ribosomal protein L9, N-terminal domain"/>
    <property type="match status" value="1"/>
</dbReference>
<dbReference type="HAMAP" id="MF_00503">
    <property type="entry name" value="Ribosomal_bL9"/>
    <property type="match status" value="1"/>
</dbReference>
<dbReference type="InterPro" id="IPR000244">
    <property type="entry name" value="Ribosomal_bL9"/>
</dbReference>
<dbReference type="InterPro" id="IPR009027">
    <property type="entry name" value="Ribosomal_bL9/RNase_H1_N"/>
</dbReference>
<dbReference type="InterPro" id="IPR020594">
    <property type="entry name" value="Ribosomal_bL9_bac/chp"/>
</dbReference>
<dbReference type="InterPro" id="IPR020069">
    <property type="entry name" value="Ribosomal_bL9_C"/>
</dbReference>
<dbReference type="InterPro" id="IPR036791">
    <property type="entry name" value="Ribosomal_bL9_C_sf"/>
</dbReference>
<dbReference type="InterPro" id="IPR020070">
    <property type="entry name" value="Ribosomal_bL9_N"/>
</dbReference>
<dbReference type="InterPro" id="IPR036935">
    <property type="entry name" value="Ribosomal_bL9_N_sf"/>
</dbReference>
<dbReference type="NCBIfam" id="TIGR00158">
    <property type="entry name" value="L9"/>
    <property type="match status" value="1"/>
</dbReference>
<dbReference type="PANTHER" id="PTHR21368">
    <property type="entry name" value="50S RIBOSOMAL PROTEIN L9"/>
    <property type="match status" value="1"/>
</dbReference>
<dbReference type="Pfam" id="PF03948">
    <property type="entry name" value="Ribosomal_L9_C"/>
    <property type="match status" value="1"/>
</dbReference>
<dbReference type="Pfam" id="PF01281">
    <property type="entry name" value="Ribosomal_L9_N"/>
    <property type="match status" value="1"/>
</dbReference>
<dbReference type="SUPFAM" id="SSF55658">
    <property type="entry name" value="L9 N-domain-like"/>
    <property type="match status" value="1"/>
</dbReference>
<dbReference type="SUPFAM" id="SSF55653">
    <property type="entry name" value="Ribosomal protein L9 C-domain"/>
    <property type="match status" value="1"/>
</dbReference>
<dbReference type="PROSITE" id="PS00651">
    <property type="entry name" value="RIBOSOMAL_L9"/>
    <property type="match status" value="1"/>
</dbReference>
<feature type="chain" id="PRO_1000014769" description="Large ribosomal subunit protein bL9">
    <location>
        <begin position="1"/>
        <end position="147"/>
    </location>
</feature>
<proteinExistence type="inferred from homology"/>
<sequence length="147" mass="16737">MKVILLKDVKSLGKKGDLVNASDGYARNYLIPKKLAEQATENNVHILNNKKEAERRQKLKELEEAQKLAKSLMGKEIKFKVKIGENGRLFGSITSKDISEKLKEQYNMDIDKKKIVAETIRQTGVYEAEIKIYPEVSTKVKVSVLEE</sequence>
<comment type="function">
    <text evidence="1">Binds to the 23S rRNA.</text>
</comment>
<comment type="similarity">
    <text evidence="1">Belongs to the bacterial ribosomal protein bL9 family.</text>
</comment>
<accession>A7GJL8</accession>
<gene>
    <name evidence="1" type="primary">rplI</name>
    <name type="ordered locus">CLI_3867</name>
</gene>
<reference key="1">
    <citation type="submission" date="2007-06" db="EMBL/GenBank/DDBJ databases">
        <authorList>
            <person name="Brinkac L.M."/>
            <person name="Daugherty S."/>
            <person name="Dodson R.J."/>
            <person name="Madupu R."/>
            <person name="Brown J.L."/>
            <person name="Bruce D."/>
            <person name="Detter C."/>
            <person name="Munk C."/>
            <person name="Smith L.A."/>
            <person name="Smith T.J."/>
            <person name="White O."/>
            <person name="Brettin T.S."/>
        </authorList>
    </citation>
    <scope>NUCLEOTIDE SEQUENCE [LARGE SCALE GENOMIC DNA]</scope>
    <source>
        <strain>Langeland / NCTC 10281 / Type F</strain>
    </source>
</reference>
<evidence type="ECO:0000255" key="1">
    <source>
        <dbReference type="HAMAP-Rule" id="MF_00503"/>
    </source>
</evidence>
<evidence type="ECO:0000305" key="2"/>
<protein>
    <recommendedName>
        <fullName evidence="1">Large ribosomal subunit protein bL9</fullName>
    </recommendedName>
    <alternativeName>
        <fullName evidence="2">50S ribosomal protein L9</fullName>
    </alternativeName>
</protein>